<comment type="function">
    <text evidence="1">Involved in the maturation of [NiFe] hydrogenases. Along with HypE, it catalyzes the synthesis of the CN ligands of the active site iron of [NiFe]-hydrogenases. HypF functions as a carbamoyl transferase using carbamoylphosphate as a substrate and transferring the carboxamido moiety in an ATP-dependent reaction to the thiolate of the C-terminal cysteine of HypE yielding a protein-S-carboxamide.</text>
</comment>
<comment type="catalytic activity">
    <reaction evidence="1">
        <text>C-terminal L-cysteinyl-[HypE protein] + carbamoyl phosphate + ATP + H2O = C-terminal S-carboxamide-L-cysteinyl-[HypE protein] + AMP + phosphate + diphosphate + H(+)</text>
        <dbReference type="Rhea" id="RHEA:55636"/>
        <dbReference type="Rhea" id="RHEA-COMP:14247"/>
        <dbReference type="Rhea" id="RHEA-COMP:14392"/>
        <dbReference type="ChEBI" id="CHEBI:15377"/>
        <dbReference type="ChEBI" id="CHEBI:15378"/>
        <dbReference type="ChEBI" id="CHEBI:30616"/>
        <dbReference type="ChEBI" id="CHEBI:33019"/>
        <dbReference type="ChEBI" id="CHEBI:43474"/>
        <dbReference type="ChEBI" id="CHEBI:58228"/>
        <dbReference type="ChEBI" id="CHEBI:76913"/>
        <dbReference type="ChEBI" id="CHEBI:139126"/>
        <dbReference type="ChEBI" id="CHEBI:456215"/>
    </reaction>
</comment>
<comment type="pathway">
    <text evidence="1">Protein modification; [NiFe] hydrogenase maturation.</text>
</comment>
<comment type="similarity">
    <text evidence="5">Belongs to the carbamoyltransferase HypF family.</text>
</comment>
<geneLocation type="plasmid">
    <name>megaplasmid pHG1</name>
</geneLocation>
<gene>
    <name type="primary">hypF2</name>
    <name type="ordered locus">PHG096</name>
</gene>
<reference key="1">
    <citation type="journal article" date="1998" name="Arch. Microbiol.">
        <title>Duplication of hyp genes involved in maturation of [NiFe] hydrogenases in Alcaligenes eutrophus H16.</title>
        <authorList>
            <person name="Wolf I."/>
            <person name="Buhrke T."/>
            <person name="Dernedde J."/>
            <person name="Pohlmann A."/>
            <person name="Friedrich B."/>
        </authorList>
    </citation>
    <scope>NUCLEOTIDE SEQUENCE [GENOMIC DNA]</scope>
</reference>
<reference key="2">
    <citation type="journal article" date="2003" name="J. Mol. Biol.">
        <title>Complete nucleotide sequence of pHG1: a Ralstonia eutropha H16 megaplasmid encoding key enzymes of H(2)-based lithoautotrophy and anaerobiosis.</title>
        <authorList>
            <person name="Schwartz E."/>
            <person name="Henne A."/>
            <person name="Cramm R."/>
            <person name="Eitinger T."/>
            <person name="Friedrich B."/>
            <person name="Gottschalk G."/>
        </authorList>
    </citation>
    <scope>NUCLEOTIDE SEQUENCE [LARGE SCALE GENOMIC DNA]</scope>
    <source>
        <strain>ATCC 17699 / DSM 428 / KCTC 22496 / NCIMB 10442 / H16 / Stanier 337</strain>
    </source>
</reference>
<accession>O07451</accession>
<accession>Q7WXM7</accession>
<keyword id="KW-0436">Ligase</keyword>
<keyword id="KW-0479">Metal-binding</keyword>
<keyword id="KW-0614">Plasmid</keyword>
<keyword id="KW-1185">Reference proteome</keyword>
<keyword id="KW-0862">Zinc</keyword>
<keyword id="KW-0863">Zinc-finger</keyword>
<dbReference type="EC" id="6.2.-.-" evidence="1"/>
<dbReference type="EMBL" id="AF002655">
    <property type="protein sequence ID" value="AAB60890.1"/>
    <property type="molecule type" value="Genomic_DNA"/>
</dbReference>
<dbReference type="EMBL" id="AY305378">
    <property type="protein sequence ID" value="AAP85849.1"/>
    <property type="molecule type" value="Genomic_DNA"/>
</dbReference>
<dbReference type="RefSeq" id="WP_011154018.1">
    <property type="nucleotide sequence ID" value="NC_005241.1"/>
</dbReference>
<dbReference type="SMR" id="O07451"/>
<dbReference type="KEGG" id="reh:PHG096"/>
<dbReference type="PATRIC" id="fig|381666.6.peg.73"/>
<dbReference type="eggNOG" id="COG0068">
    <property type="taxonomic scope" value="Bacteria"/>
</dbReference>
<dbReference type="HOGENOM" id="CLU_009164_0_0_4"/>
<dbReference type="OrthoDB" id="9808093at2"/>
<dbReference type="UniPathway" id="UPA00335"/>
<dbReference type="Proteomes" id="UP000008210">
    <property type="component" value="Plasmid megaplasmid pHG1"/>
</dbReference>
<dbReference type="GO" id="GO:0016743">
    <property type="term" value="F:carboxyl- or carbamoyltransferase activity"/>
    <property type="evidence" value="ECO:0007669"/>
    <property type="project" value="InterPro"/>
</dbReference>
<dbReference type="GO" id="GO:0003725">
    <property type="term" value="F:double-stranded RNA binding"/>
    <property type="evidence" value="ECO:0007669"/>
    <property type="project" value="InterPro"/>
</dbReference>
<dbReference type="GO" id="GO:0016874">
    <property type="term" value="F:ligase activity"/>
    <property type="evidence" value="ECO:0007669"/>
    <property type="project" value="UniProtKB-KW"/>
</dbReference>
<dbReference type="GO" id="GO:0008270">
    <property type="term" value="F:zinc ion binding"/>
    <property type="evidence" value="ECO:0007669"/>
    <property type="project" value="UniProtKB-KW"/>
</dbReference>
<dbReference type="GO" id="GO:0051604">
    <property type="term" value="P:protein maturation"/>
    <property type="evidence" value="ECO:0007669"/>
    <property type="project" value="TreeGrafter"/>
</dbReference>
<dbReference type="Gene3D" id="3.30.110.120">
    <property type="match status" value="1"/>
</dbReference>
<dbReference type="Gene3D" id="3.30.420.360">
    <property type="match status" value="1"/>
</dbReference>
<dbReference type="Gene3D" id="3.30.420.40">
    <property type="match status" value="1"/>
</dbReference>
<dbReference type="Gene3D" id="3.90.870.50">
    <property type="match status" value="1"/>
</dbReference>
<dbReference type="InterPro" id="IPR001792">
    <property type="entry name" value="Acylphosphatase-like_dom"/>
</dbReference>
<dbReference type="InterPro" id="IPR036046">
    <property type="entry name" value="Acylphosphatase-like_dom_sf"/>
</dbReference>
<dbReference type="InterPro" id="IPR017968">
    <property type="entry name" value="Acylphosphatase_CS"/>
</dbReference>
<dbReference type="InterPro" id="IPR051060">
    <property type="entry name" value="Carbamoyltrans_HypF-like"/>
</dbReference>
<dbReference type="InterPro" id="IPR004421">
    <property type="entry name" value="Carbamoyltransferase_HypF"/>
</dbReference>
<dbReference type="InterPro" id="IPR017945">
    <property type="entry name" value="DHBP_synth_RibB-like_a/b_dom"/>
</dbReference>
<dbReference type="InterPro" id="IPR041440">
    <property type="entry name" value="HypF_C"/>
</dbReference>
<dbReference type="InterPro" id="IPR055128">
    <property type="entry name" value="HypF_C_2"/>
</dbReference>
<dbReference type="InterPro" id="IPR006070">
    <property type="entry name" value="Sua5-like_dom"/>
</dbReference>
<dbReference type="InterPro" id="IPR011125">
    <property type="entry name" value="Znf_HypF"/>
</dbReference>
<dbReference type="NCBIfam" id="TIGR00143">
    <property type="entry name" value="hypF"/>
    <property type="match status" value="1"/>
</dbReference>
<dbReference type="PANTHER" id="PTHR42959">
    <property type="entry name" value="CARBAMOYLTRANSFERASE"/>
    <property type="match status" value="1"/>
</dbReference>
<dbReference type="PANTHER" id="PTHR42959:SF1">
    <property type="entry name" value="CARBAMOYLTRANSFERASE HYPF"/>
    <property type="match status" value="1"/>
</dbReference>
<dbReference type="Pfam" id="PF00708">
    <property type="entry name" value="Acylphosphatase"/>
    <property type="match status" value="1"/>
</dbReference>
<dbReference type="Pfam" id="PF17788">
    <property type="entry name" value="HypF_C"/>
    <property type="match status" value="1"/>
</dbReference>
<dbReference type="Pfam" id="PF22521">
    <property type="entry name" value="HypF_C_2"/>
    <property type="match status" value="1"/>
</dbReference>
<dbReference type="Pfam" id="PF01300">
    <property type="entry name" value="Sua5_yciO_yrdC"/>
    <property type="match status" value="1"/>
</dbReference>
<dbReference type="Pfam" id="PF07503">
    <property type="entry name" value="zf-HYPF"/>
    <property type="match status" value="2"/>
</dbReference>
<dbReference type="PIRSF" id="PIRSF006256">
    <property type="entry name" value="CMPcnvr_hdrg_mat"/>
    <property type="match status" value="1"/>
</dbReference>
<dbReference type="SUPFAM" id="SSF54975">
    <property type="entry name" value="Acylphosphatase/BLUF domain-like"/>
    <property type="match status" value="1"/>
</dbReference>
<dbReference type="SUPFAM" id="SSF55821">
    <property type="entry name" value="YrdC/RibB"/>
    <property type="match status" value="1"/>
</dbReference>
<dbReference type="PROSITE" id="PS00150">
    <property type="entry name" value="ACYLPHOSPHATASE_1"/>
    <property type="match status" value="1"/>
</dbReference>
<dbReference type="PROSITE" id="PS51160">
    <property type="entry name" value="ACYLPHOSPHATASE_3"/>
    <property type="match status" value="1"/>
</dbReference>
<dbReference type="PROSITE" id="PS51163">
    <property type="entry name" value="YRDC"/>
    <property type="match status" value="1"/>
</dbReference>
<organism>
    <name type="scientific">Cupriavidus necator (strain ATCC 17699 / DSM 428 / KCTC 22496 / NCIMB 10442 / H16 / Stanier 337)</name>
    <name type="common">Ralstonia eutropha</name>
    <dbReference type="NCBI Taxonomy" id="381666"/>
    <lineage>
        <taxon>Bacteria</taxon>
        <taxon>Pseudomonadati</taxon>
        <taxon>Pseudomonadota</taxon>
        <taxon>Betaproteobacteria</taxon>
        <taxon>Burkholderiales</taxon>
        <taxon>Burkholderiaceae</taxon>
        <taxon>Cupriavidus</taxon>
    </lineage>
</organism>
<evidence type="ECO:0000250" key="1">
    <source>
        <dbReference type="UniProtKB" id="P30131"/>
    </source>
</evidence>
<evidence type="ECO:0000255" key="2">
    <source>
        <dbReference type="PROSITE-ProRule" id="PRU00518"/>
    </source>
</evidence>
<evidence type="ECO:0000255" key="3">
    <source>
        <dbReference type="PROSITE-ProRule" id="PRU00520"/>
    </source>
</evidence>
<evidence type="ECO:0000256" key="4">
    <source>
        <dbReference type="SAM" id="MobiDB-lite"/>
    </source>
</evidence>
<evidence type="ECO:0000305" key="5"/>
<name>HYPF2_CUPNH</name>
<sequence>MLMPRRPRNPRTVRIRIRVRGVVQGVGFRPFVYRLARELGLAGWVRNDGAGVDIEAQGSAAALVELRERLRRDAPPLARVDEIGEERCAAQVDADGFAILESSRSDAAVHTAIGHDTAVCPDCLAELFDPANRRYRYAFINCTQCGPRYTLTWALPYDRATTSMAPFPQCRPCLDEYNAPEHRRFHAEPNACPDCGPSLALLNAQGMPVEDVDPIAETVARLQRGEIVAIKGLGGFHLACDAHNADAVARLRSRKQREEKPFAVMVANLATAAQWGDIGSGEAALLTASERPIVLLRKRSGVDGRFAGVAPGLVWLGVMLPYTPLQYLLFHEAAGRPEGLGWLAQPQSLVLVMTSANPGGEPLVTGNDEAAQRLTGIADAFLLHDREILVRCDDSVVRGDGEPAPHVQFIRRARGYTPRAIKLARSGPSVLALGGSFKNTVCLTRGDEAFVSQHVGDLGNAATCEALIEAVAHLQRVLEIRPQLVAHDLHPDFFSTRHAAELAAQWGVPAVAVQHHHAHIAAVLAEHGSDEPAIGLALDGVGLGDDGQAWGGELLLVDGGACKRLGHLRELPLPGGDRAAREPWRMAAAALHAMGRGEEIEGRFPRQPGAPMVNRMLAQRLNAPLSSSMGRWFDAAAGLLGTRETMAYEGQAAMLLEGLAESWGEQPSPGRPKTVAHSLGGVPRSGGGTYKALALPDAWRIDAGNTLDLLPLLEALSAETNAARGAAQFHATLVAALEAWTVATVQVTGVRTVVFGGGCFLNHILARNLCRRLAARGLTVLTARQLPPNDGGIALGQVWVALQRAPN</sequence>
<feature type="chain" id="PRO_0000071615" description="Carbamoyltransferase HypF2">
    <location>
        <begin position="1"/>
        <end position="807"/>
    </location>
</feature>
<feature type="domain" description="Acylphosphatase-like" evidence="3">
    <location>
        <begin position="14"/>
        <end position="101"/>
    </location>
</feature>
<feature type="domain" description="YrdC-like" evidence="2">
    <location>
        <begin position="212"/>
        <end position="415"/>
    </location>
</feature>
<feature type="zinc finger region" description="C4-type" evidence="1">
    <location>
        <begin position="120"/>
        <end position="145"/>
    </location>
</feature>
<feature type="zinc finger region" description="C4-type" evidence="1">
    <location>
        <begin position="170"/>
        <end position="195"/>
    </location>
</feature>
<feature type="region of interest" description="Disordered" evidence="4">
    <location>
        <begin position="663"/>
        <end position="682"/>
    </location>
</feature>
<feature type="sequence conflict" description="In Ref. 1; AAB60890." evidence="5" ref="1">
    <original>ELRE</original>
    <variation>DSRLR</variation>
    <location>
        <begin position="65"/>
        <end position="68"/>
    </location>
</feature>
<feature type="sequence conflict" description="In Ref. 1; AAB60890." evidence="5" ref="1">
    <original>A</original>
    <variation>D</variation>
    <location>
        <position position="179"/>
    </location>
</feature>
<feature type="sequence conflict" description="In Ref. 1; AAB60890." evidence="5" ref="1">
    <original>RS</original>
    <variation>H</variation>
    <location>
        <begin position="299"/>
        <end position="300"/>
    </location>
</feature>
<feature type="sequence conflict" description="In Ref. 1; AAB60890." evidence="5" ref="1">
    <original>A</original>
    <variation>T</variation>
    <location>
        <position position="370"/>
    </location>
</feature>
<feature type="sequence conflict" description="In Ref. 1; AAB60890." evidence="5" ref="1">
    <original>LLLVDGGACKRLGHLRE</original>
    <variation>TAAGGRRRLLAPRSLAR</variation>
    <location>
        <begin position="554"/>
        <end position="570"/>
    </location>
</feature>
<feature type="sequence conflict" description="In Ref. 1; AAB60890." evidence="5" ref="1">
    <original>S</original>
    <variation>R</variation>
    <location>
        <position position="685"/>
    </location>
</feature>
<feature type="sequence conflict" description="In Ref. 1; AAB60890." evidence="5" ref="1">
    <location>
        <position position="688"/>
    </location>
</feature>
<feature type="sequence conflict" description="In Ref. 1; AAB60890." evidence="5" ref="1">
    <original>TNAARGAA</original>
    <variation>NECRARRS</variation>
    <location>
        <begin position="720"/>
        <end position="727"/>
    </location>
</feature>
<protein>
    <recommendedName>
        <fullName evidence="1">Carbamoyltransferase HypF2</fullName>
        <ecNumber evidence="1">6.2.-.-</ecNumber>
    </recommendedName>
    <alternativeName>
        <fullName>Carbamoyl phosphate-converting enzyme hypF2</fullName>
    </alternativeName>
    <alternativeName>
        <fullName>[NiFe]-hydrogenase maturation factor hypF2</fullName>
        <shortName>Hydrogenase maturation protein hypF2</shortName>
    </alternativeName>
</protein>
<proteinExistence type="inferred from homology"/>